<evidence type="ECO:0000250" key="1">
    <source>
        <dbReference type="UniProtKB" id="A0A1E3P8S6"/>
    </source>
</evidence>
<evidence type="ECO:0000255" key="2"/>
<evidence type="ECO:0000269" key="3">
    <source>
    </source>
</evidence>
<evidence type="ECO:0000305" key="4"/>
<evidence type="ECO:0000305" key="5">
    <source>
    </source>
</evidence>
<keyword id="KW-0378">Hydrolase</keyword>
<keyword id="KW-0496">Mitochondrion</keyword>
<keyword id="KW-1185">Reference proteome</keyword>
<keyword id="KW-0808">Transferase</keyword>
<keyword id="KW-0809">Transit peptide</keyword>
<sequence>MFASRILRNSAQTLKTELPHKETIKMAYDLHKPRSTAIRHLNENPEEPILFLHGIFGSKKSYATDSKLIASSTHTPVYTMDLRNHGETGHAQPFNYETLAQDVKEFCDEHKLDKVKLIGYSLGAKVSMLTALQFPNLVKSAVIIDNAPIPQPQIQLFMKQYIKSMLHVLNESKIRADDKDWKNKASAAMKRFLPNGVIRKNLLVNLVNKPPKDFESPVIDFEDGYIHFLNPIEQMEEMAVKDVTDWPVETTKDLKFEGPVKFIKGLQSPFITDEGMKAIQTHFPNNDFTDVNSNHDILDQRPSEYVKIITDFFNKQRYQSAPDDTILGNKTPTPKQTEVSA</sequence>
<dbReference type="EC" id="2.3.1.-"/>
<dbReference type="EMBL" id="KV454208">
    <property type="protein sequence ID" value="ODQ61815.1"/>
    <property type="molecule type" value="Genomic_DNA"/>
</dbReference>
<dbReference type="RefSeq" id="XP_019041022.1">
    <property type="nucleotide sequence ID" value="XM_019182618.1"/>
</dbReference>
<dbReference type="SMR" id="A0A1E3P8S8"/>
<dbReference type="STRING" id="683960.A0A1E3P8S8"/>
<dbReference type="ESTHER" id="wicao-a0a1e3p8s8">
    <property type="family name" value="ABHD11-Acetyl_transferase"/>
</dbReference>
<dbReference type="GeneID" id="30199864"/>
<dbReference type="OrthoDB" id="8119704at2759"/>
<dbReference type="Proteomes" id="UP000094112">
    <property type="component" value="Unassembled WGS sequence"/>
</dbReference>
<dbReference type="GO" id="GO:0005739">
    <property type="term" value="C:mitochondrion"/>
    <property type="evidence" value="ECO:0007669"/>
    <property type="project" value="UniProtKB-SubCell"/>
</dbReference>
<dbReference type="GO" id="GO:0052689">
    <property type="term" value="F:carboxylic ester hydrolase activity"/>
    <property type="evidence" value="ECO:0007669"/>
    <property type="project" value="TreeGrafter"/>
</dbReference>
<dbReference type="GO" id="GO:0016740">
    <property type="term" value="F:transferase activity"/>
    <property type="evidence" value="ECO:0007669"/>
    <property type="project" value="UniProtKB-KW"/>
</dbReference>
<dbReference type="Gene3D" id="3.40.50.1820">
    <property type="entry name" value="alpha/beta hydrolase"/>
    <property type="match status" value="1"/>
</dbReference>
<dbReference type="InterPro" id="IPR000073">
    <property type="entry name" value="AB_hydrolase_1"/>
</dbReference>
<dbReference type="InterPro" id="IPR029058">
    <property type="entry name" value="AB_hydrolase_fold"/>
</dbReference>
<dbReference type="PANTHER" id="PTHR46118">
    <property type="entry name" value="PROTEIN ABHD11"/>
    <property type="match status" value="1"/>
</dbReference>
<dbReference type="PANTHER" id="PTHR46118:SF4">
    <property type="entry name" value="PROTEIN ABHD11"/>
    <property type="match status" value="1"/>
</dbReference>
<dbReference type="Pfam" id="PF00561">
    <property type="entry name" value="Abhydrolase_1"/>
    <property type="match status" value="1"/>
</dbReference>
<dbReference type="SUPFAM" id="SSF53474">
    <property type="entry name" value="alpha/beta-Hydrolases"/>
    <property type="match status" value="1"/>
</dbReference>
<name>EAT2_WICAA</name>
<reference key="1">
    <citation type="journal article" date="2016" name="Proc. Natl. Acad. Sci. U.S.A.">
        <title>Comparative genomics of biotechnologically important yeasts.</title>
        <authorList>
            <person name="Riley R."/>
            <person name="Haridas S."/>
            <person name="Wolfe K.H."/>
            <person name="Lopes M.R."/>
            <person name="Hittinger C.T."/>
            <person name="Goeker M."/>
            <person name="Salamov A.A."/>
            <person name="Wisecaver J.H."/>
            <person name="Long T.M."/>
            <person name="Calvey C.H."/>
            <person name="Aerts A.L."/>
            <person name="Barry K.W."/>
            <person name="Choi C."/>
            <person name="Clum A."/>
            <person name="Coughlan A.Y."/>
            <person name="Deshpande S."/>
            <person name="Douglass A.P."/>
            <person name="Hanson S.J."/>
            <person name="Klenk H.-P."/>
            <person name="LaButti K.M."/>
            <person name="Lapidus A."/>
            <person name="Lindquist E.A."/>
            <person name="Lipzen A.M."/>
            <person name="Meier-Kolthoff J.P."/>
            <person name="Ohm R.A."/>
            <person name="Otillar R.P."/>
            <person name="Pangilinan J.L."/>
            <person name="Peng Y."/>
            <person name="Rokas A."/>
            <person name="Rosa C.A."/>
            <person name="Scheuner C."/>
            <person name="Sibirny A.A."/>
            <person name="Slot J.C."/>
            <person name="Stielow J.B."/>
            <person name="Sun H."/>
            <person name="Kurtzman C.P."/>
            <person name="Blackwell M."/>
            <person name="Grigoriev I.V."/>
            <person name="Jeffries T.W."/>
        </authorList>
    </citation>
    <scope>NUCLEOTIDE SEQUENCE [LARGE SCALE GENOMIC DNA]</scope>
    <source>
        <strain>ATCC 58044 / CBS 1984 / NCYC 433 / NRRL Y-366-8</strain>
    </source>
</reference>
<reference key="2">
    <citation type="journal article" date="2017" name="Metab. Eng.">
        <title>Ethyl acetate production by the elusive alcohol acetyltransferase from yeast.</title>
        <authorList>
            <person name="Kruis A.J."/>
            <person name="Levisson M."/>
            <person name="Mars A.E."/>
            <person name="van der Ploeg M."/>
            <person name="Garces Daza F."/>
            <person name="Ellena V."/>
            <person name="Kengen S.W.M."/>
            <person name="van der Oost J."/>
            <person name="Weusthuis R.A."/>
        </authorList>
    </citation>
    <scope>FUNCTION</scope>
    <source>
        <strain>ATCC 8168 / CBS 5759 / DSM 6766 / JCM 3585 / NCYC 432 / NBRC 10213 / NRRL Y-366</strain>
    </source>
</reference>
<gene>
    <name type="primary">EAT2</name>
    <name type="ORF">WICANDRAFT_48865</name>
</gene>
<organism>
    <name type="scientific">Wickerhamomyces anomalus (strain ATCC 58044 / CBS 1984 / NCYC 433 / NRRL Y-366-8)</name>
    <name type="common">Yeast</name>
    <name type="synonym">Hansenula anomala</name>
    <dbReference type="NCBI Taxonomy" id="683960"/>
    <lineage>
        <taxon>Eukaryota</taxon>
        <taxon>Fungi</taxon>
        <taxon>Dikarya</taxon>
        <taxon>Ascomycota</taxon>
        <taxon>Saccharomycotina</taxon>
        <taxon>Saccharomycetes</taxon>
        <taxon>Phaffomycetales</taxon>
        <taxon>Wickerhamomycetaceae</taxon>
        <taxon>Wickerhamomyces</taxon>
    </lineage>
</organism>
<protein>
    <recommendedName>
        <fullName>Probable alcohol acetyltransferase</fullName>
        <shortName>AAT</shortName>
        <ecNumber>2.3.1.-</ecNumber>
    </recommendedName>
</protein>
<comment type="function">
    <text evidence="3 5">Probable alcohol acetyltransferase that uses acetyl-CoA to synthesize acetate esters from various alcohols (Probable). Not involved in the synthesis of ethyl acetate (PubMed:28356220).</text>
</comment>
<comment type="subcellular location">
    <subcellularLocation>
        <location evidence="2">Mitochondrion</location>
    </subcellularLocation>
</comment>
<comment type="similarity">
    <text evidence="4">Belongs to the AB hydrolase superfamily.</text>
</comment>
<feature type="transit peptide" description="Mitochondrion" evidence="2">
    <location>
        <begin position="1"/>
        <end position="40"/>
    </location>
</feature>
<feature type="chain" id="PRO_0000446183" description="Probable alcohol acetyltransferase">
    <location>
        <begin position="41"/>
        <end position="341"/>
    </location>
</feature>
<feature type="domain" description="AB hydrolase-1" evidence="2">
    <location>
        <begin position="48"/>
        <end position="301"/>
    </location>
</feature>
<feature type="active site" description="Charge relay system" evidence="1">
    <location>
        <position position="121"/>
    </location>
</feature>
<feature type="active site" description="Charge relay system" evidence="1">
    <location>
        <position position="145"/>
    </location>
</feature>
<feature type="active site" description="Charge relay system" evidence="1">
    <location>
        <position position="295"/>
    </location>
</feature>
<proteinExistence type="inferred from homology"/>
<accession>A0A1E3P8S8</accession>